<sequence length="236" mass="25759">MAATLLDVCAVVPAAGFGRRMQTECPKQYLSIGNKTILEHSVHALLAHPRVTRVVIAISPGDHRFAQLPLANHPQITVVDGGNERADSVLAGLQAVAKAQWVLVHDAARPCLHQDDLARLLTISENSRVGGILASPVRDTMKRGEPGKNAIAHTVERADLWHALTPQFFPRELLHDCLTRALNEGATITDEASALEYCGFHPALVEGRADNIKVTRPEDLALAEFYLTRTIHQEKA</sequence>
<reference key="1">
    <citation type="journal article" date="2008" name="Genome Res.">
        <title>Comparative genome analysis of Salmonella enteritidis PT4 and Salmonella gallinarum 287/91 provides insights into evolutionary and host adaptation pathways.</title>
        <authorList>
            <person name="Thomson N.R."/>
            <person name="Clayton D.J."/>
            <person name="Windhorst D."/>
            <person name="Vernikos G."/>
            <person name="Davidson S."/>
            <person name="Churcher C."/>
            <person name="Quail M.A."/>
            <person name="Stevens M."/>
            <person name="Jones M.A."/>
            <person name="Watson M."/>
            <person name="Barron A."/>
            <person name="Layton A."/>
            <person name="Pickard D."/>
            <person name="Kingsley R.A."/>
            <person name="Bignell A."/>
            <person name="Clark L."/>
            <person name="Harris B."/>
            <person name="Ormond D."/>
            <person name="Abdellah Z."/>
            <person name="Brooks K."/>
            <person name="Cherevach I."/>
            <person name="Chillingworth T."/>
            <person name="Woodward J."/>
            <person name="Norberczak H."/>
            <person name="Lord A."/>
            <person name="Arrowsmith C."/>
            <person name="Jagels K."/>
            <person name="Moule S."/>
            <person name="Mungall K."/>
            <person name="Saunders M."/>
            <person name="Whitehead S."/>
            <person name="Chabalgoity J.A."/>
            <person name="Maskell D."/>
            <person name="Humphreys T."/>
            <person name="Roberts M."/>
            <person name="Barrow P.A."/>
            <person name="Dougan G."/>
            <person name="Parkhill J."/>
        </authorList>
    </citation>
    <scope>NUCLEOTIDE SEQUENCE [LARGE SCALE GENOMIC DNA]</scope>
    <source>
        <strain>287/91 / NCTC 13346</strain>
    </source>
</reference>
<organism>
    <name type="scientific">Salmonella gallinarum (strain 287/91 / NCTC 13346)</name>
    <dbReference type="NCBI Taxonomy" id="550538"/>
    <lineage>
        <taxon>Bacteria</taxon>
        <taxon>Pseudomonadati</taxon>
        <taxon>Pseudomonadota</taxon>
        <taxon>Gammaproteobacteria</taxon>
        <taxon>Enterobacterales</taxon>
        <taxon>Enterobacteriaceae</taxon>
        <taxon>Salmonella</taxon>
    </lineage>
</organism>
<comment type="function">
    <text evidence="1">Catalyzes the formation of 4-diphosphocytidyl-2-C-methyl-D-erythritol from CTP and 2-C-methyl-D-erythritol 4-phosphate (MEP).</text>
</comment>
<comment type="catalytic activity">
    <reaction evidence="1">
        <text>2-C-methyl-D-erythritol 4-phosphate + CTP + H(+) = 4-CDP-2-C-methyl-D-erythritol + diphosphate</text>
        <dbReference type="Rhea" id="RHEA:13429"/>
        <dbReference type="ChEBI" id="CHEBI:15378"/>
        <dbReference type="ChEBI" id="CHEBI:33019"/>
        <dbReference type="ChEBI" id="CHEBI:37563"/>
        <dbReference type="ChEBI" id="CHEBI:57823"/>
        <dbReference type="ChEBI" id="CHEBI:58262"/>
        <dbReference type="EC" id="2.7.7.60"/>
    </reaction>
</comment>
<comment type="pathway">
    <text evidence="1">Isoprenoid biosynthesis; isopentenyl diphosphate biosynthesis via DXP pathway; isopentenyl diphosphate from 1-deoxy-D-xylulose 5-phosphate: step 2/6.</text>
</comment>
<comment type="subunit">
    <text evidence="1">Homodimer.</text>
</comment>
<comment type="similarity">
    <text evidence="1">Belongs to the IspD/TarI cytidylyltransferase family. IspD subfamily.</text>
</comment>
<protein>
    <recommendedName>
        <fullName evidence="1">2-C-methyl-D-erythritol 4-phosphate cytidylyltransferase</fullName>
        <ecNumber evidence="1">2.7.7.60</ecNumber>
    </recommendedName>
    <alternativeName>
        <fullName evidence="1">4-diphosphocytidyl-2C-methyl-D-erythritol synthase</fullName>
    </alternativeName>
    <alternativeName>
        <fullName evidence="1">MEP cytidylyltransferase</fullName>
        <shortName evidence="1">MCT</shortName>
    </alternativeName>
</protein>
<proteinExistence type="inferred from homology"/>
<keyword id="KW-0414">Isoprene biosynthesis</keyword>
<keyword id="KW-0548">Nucleotidyltransferase</keyword>
<keyword id="KW-0808">Transferase</keyword>
<dbReference type="EC" id="2.7.7.60" evidence="1"/>
<dbReference type="EMBL" id="AM933173">
    <property type="protein sequence ID" value="CAR38641.1"/>
    <property type="molecule type" value="Genomic_DNA"/>
</dbReference>
<dbReference type="RefSeq" id="WP_000741653.1">
    <property type="nucleotide sequence ID" value="NC_011274.1"/>
</dbReference>
<dbReference type="SMR" id="B5RDQ3"/>
<dbReference type="KEGG" id="seg:SG2833"/>
<dbReference type="HOGENOM" id="CLU_061281_3_1_6"/>
<dbReference type="UniPathway" id="UPA00056">
    <property type="reaction ID" value="UER00093"/>
</dbReference>
<dbReference type="Proteomes" id="UP000008321">
    <property type="component" value="Chromosome"/>
</dbReference>
<dbReference type="GO" id="GO:0050518">
    <property type="term" value="F:2-C-methyl-D-erythritol 4-phosphate cytidylyltransferase activity"/>
    <property type="evidence" value="ECO:0007669"/>
    <property type="project" value="UniProtKB-UniRule"/>
</dbReference>
<dbReference type="GO" id="GO:0019288">
    <property type="term" value="P:isopentenyl diphosphate biosynthetic process, methylerythritol 4-phosphate pathway"/>
    <property type="evidence" value="ECO:0007669"/>
    <property type="project" value="UniProtKB-UniRule"/>
</dbReference>
<dbReference type="CDD" id="cd02516">
    <property type="entry name" value="CDP-ME_synthetase"/>
    <property type="match status" value="1"/>
</dbReference>
<dbReference type="FunFam" id="3.90.550.10:FF:000003">
    <property type="entry name" value="2-C-methyl-D-erythritol 4-phosphate cytidylyltransferase"/>
    <property type="match status" value="1"/>
</dbReference>
<dbReference type="Gene3D" id="3.90.550.10">
    <property type="entry name" value="Spore Coat Polysaccharide Biosynthesis Protein SpsA, Chain A"/>
    <property type="match status" value="1"/>
</dbReference>
<dbReference type="HAMAP" id="MF_00108">
    <property type="entry name" value="IspD"/>
    <property type="match status" value="1"/>
</dbReference>
<dbReference type="InterPro" id="IPR001228">
    <property type="entry name" value="IspD"/>
</dbReference>
<dbReference type="InterPro" id="IPR034683">
    <property type="entry name" value="IspD/TarI"/>
</dbReference>
<dbReference type="InterPro" id="IPR050088">
    <property type="entry name" value="IspD/TarI_cytidylyltransf_bact"/>
</dbReference>
<dbReference type="InterPro" id="IPR018294">
    <property type="entry name" value="ISPD_synthase_CS"/>
</dbReference>
<dbReference type="InterPro" id="IPR029044">
    <property type="entry name" value="Nucleotide-diphossugar_trans"/>
</dbReference>
<dbReference type="NCBIfam" id="TIGR00453">
    <property type="entry name" value="ispD"/>
    <property type="match status" value="1"/>
</dbReference>
<dbReference type="PANTHER" id="PTHR32125">
    <property type="entry name" value="2-C-METHYL-D-ERYTHRITOL 4-PHOSPHATE CYTIDYLYLTRANSFERASE, CHLOROPLASTIC"/>
    <property type="match status" value="1"/>
</dbReference>
<dbReference type="PANTHER" id="PTHR32125:SF4">
    <property type="entry name" value="2-C-METHYL-D-ERYTHRITOL 4-PHOSPHATE CYTIDYLYLTRANSFERASE, CHLOROPLASTIC"/>
    <property type="match status" value="1"/>
</dbReference>
<dbReference type="Pfam" id="PF01128">
    <property type="entry name" value="IspD"/>
    <property type="match status" value="1"/>
</dbReference>
<dbReference type="SUPFAM" id="SSF53448">
    <property type="entry name" value="Nucleotide-diphospho-sugar transferases"/>
    <property type="match status" value="1"/>
</dbReference>
<dbReference type="PROSITE" id="PS01295">
    <property type="entry name" value="ISPD"/>
    <property type="match status" value="1"/>
</dbReference>
<accession>B5RDQ3</accession>
<gene>
    <name evidence="1" type="primary">ispD</name>
    <name type="ordered locus">SG2833</name>
</gene>
<evidence type="ECO:0000255" key="1">
    <source>
        <dbReference type="HAMAP-Rule" id="MF_00108"/>
    </source>
</evidence>
<feature type="chain" id="PRO_1000094345" description="2-C-methyl-D-erythritol 4-phosphate cytidylyltransferase">
    <location>
        <begin position="1"/>
        <end position="236"/>
    </location>
</feature>
<feature type="site" description="Transition state stabilizer" evidence="1">
    <location>
        <position position="20"/>
    </location>
</feature>
<feature type="site" description="Transition state stabilizer" evidence="1">
    <location>
        <position position="27"/>
    </location>
</feature>
<feature type="site" description="Positions MEP for the nucleophilic attack" evidence="1">
    <location>
        <position position="157"/>
    </location>
</feature>
<feature type="site" description="Positions MEP for the nucleophilic attack" evidence="1">
    <location>
        <position position="213"/>
    </location>
</feature>
<name>ISPD_SALG2</name>